<sequence>MQDFAFAALSIWLCLGATALAESHGPQHCTSPNMTGVLTVMALTGGEIKATGHYSYDSTNKKLRFTESEMHLNKTEHLEDYLMLFEEGVFYDIDMKNQSCKKMSLHSHAHALELPAGAAHQVELFLGSDTVQEDNIKVNIWMGSVAETKGQYSALTTVGECLPLSTFYSTDSITLLFSNSEVVTEVKAPEMFTLPSFCEAVELEETPKGQKNDFFNIFNTV</sequence>
<gene>
    <name type="primary">epd2</name>
</gene>
<reference key="1">
    <citation type="journal article" date="1992" name="Gene">
        <title>Ependymins from the cerebrospinal fluid of salmonid fish: gene structure and molecular characterization.</title>
        <authorList>
            <person name="Mueller-Schmid A."/>
            <person name="Rinder H."/>
            <person name="Lottspeich F."/>
            <person name="Gertzen E.-M."/>
            <person name="Hoffmann W."/>
        </authorList>
    </citation>
    <scope>NUCLEOTIDE SEQUENCE [MRNA]</scope>
    <source>
        <tissue>Cerebrospinal fluid</tissue>
    </source>
</reference>
<dbReference type="EMBL" id="M93698">
    <property type="protein sequence ID" value="AAA49400.1"/>
    <property type="molecule type" value="mRNA"/>
</dbReference>
<dbReference type="PIR" id="JC1251">
    <property type="entry name" value="JC1251"/>
</dbReference>
<dbReference type="RefSeq" id="NP_001118166.1">
    <property type="nucleotide sequence ID" value="NM_001124694.1"/>
</dbReference>
<dbReference type="SMR" id="P28771"/>
<dbReference type="GlyCosmos" id="P28771">
    <property type="glycosylation" value="3 sites, No reported glycans"/>
</dbReference>
<dbReference type="GeneID" id="100136739"/>
<dbReference type="KEGG" id="omy:100136739"/>
<dbReference type="CTD" id="100136739"/>
<dbReference type="OrthoDB" id="8872894at2759"/>
<dbReference type="Proteomes" id="UP000694395">
    <property type="component" value="Unplaced"/>
</dbReference>
<dbReference type="GO" id="GO:0005576">
    <property type="term" value="C:extracellular region"/>
    <property type="evidence" value="ECO:0007669"/>
    <property type="project" value="UniProtKB-SubCell"/>
</dbReference>
<dbReference type="GO" id="GO:0005764">
    <property type="term" value="C:lysosome"/>
    <property type="evidence" value="ECO:0007669"/>
    <property type="project" value="TreeGrafter"/>
</dbReference>
<dbReference type="GO" id="GO:0005509">
    <property type="term" value="F:calcium ion binding"/>
    <property type="evidence" value="ECO:0007669"/>
    <property type="project" value="InterPro"/>
</dbReference>
<dbReference type="GO" id="GO:0007160">
    <property type="term" value="P:cell-matrix adhesion"/>
    <property type="evidence" value="ECO:0007669"/>
    <property type="project" value="InterPro"/>
</dbReference>
<dbReference type="InterPro" id="IPR001299">
    <property type="entry name" value="Ependymin"/>
</dbReference>
<dbReference type="InterPro" id="IPR018224">
    <property type="entry name" value="Ependymin_CS"/>
</dbReference>
<dbReference type="PANTHER" id="PTHR10697:SF5">
    <property type="entry name" value="EPENDYMIN-RELATED"/>
    <property type="match status" value="1"/>
</dbReference>
<dbReference type="PANTHER" id="PTHR10697">
    <property type="entry name" value="MAMMALIAN EPENDYMIN-RELATED PROTEIN 1"/>
    <property type="match status" value="1"/>
</dbReference>
<dbReference type="Pfam" id="PF00811">
    <property type="entry name" value="Ependymin"/>
    <property type="match status" value="1"/>
</dbReference>
<dbReference type="PRINTS" id="PR00317">
    <property type="entry name" value="EPENDYMIN"/>
</dbReference>
<dbReference type="SMART" id="SM00026">
    <property type="entry name" value="EPEND"/>
    <property type="match status" value="1"/>
</dbReference>
<dbReference type="PROSITE" id="PS00898">
    <property type="entry name" value="EPENDYMIN_1"/>
    <property type="match status" value="1"/>
</dbReference>
<dbReference type="PROSITE" id="PS00899">
    <property type="entry name" value="EPENDYMIN_2"/>
    <property type="match status" value="1"/>
</dbReference>
<organism>
    <name type="scientific">Oncorhynchus mykiss</name>
    <name type="common">Rainbow trout</name>
    <name type="synonym">Salmo gairdneri</name>
    <dbReference type="NCBI Taxonomy" id="8022"/>
    <lineage>
        <taxon>Eukaryota</taxon>
        <taxon>Metazoa</taxon>
        <taxon>Chordata</taxon>
        <taxon>Craniata</taxon>
        <taxon>Vertebrata</taxon>
        <taxon>Euteleostomi</taxon>
        <taxon>Actinopterygii</taxon>
        <taxon>Neopterygii</taxon>
        <taxon>Teleostei</taxon>
        <taxon>Protacanthopterygii</taxon>
        <taxon>Salmoniformes</taxon>
        <taxon>Salmonidae</taxon>
        <taxon>Salmoninae</taxon>
        <taxon>Oncorhynchus</taxon>
    </lineage>
</organism>
<keyword id="KW-0106">Calcium</keyword>
<keyword id="KW-0325">Glycoprotein</keyword>
<keyword id="KW-0964">Secreted</keyword>
<keyword id="KW-0732">Signal</keyword>
<comment type="function">
    <text>May play a role in neural plasticity. May be involved during axon regeneration.</text>
</comment>
<comment type="subcellular location">
    <subcellularLocation>
        <location>Secreted</location>
    </subcellularLocation>
</comment>
<comment type="tissue specificity">
    <text>EPDs are synthesized in the meninx and secreted in the cerebrospinal fluid.</text>
</comment>
<comment type="PTM">
    <text>Binds calcium through the terminal sialic acids.</text>
</comment>
<comment type="similarity">
    <text evidence="2">Belongs to the ependymin family.</text>
</comment>
<evidence type="ECO:0000255" key="1"/>
<evidence type="ECO:0000305" key="2"/>
<feature type="signal peptide" evidence="1">
    <location>
        <begin position="1"/>
        <end position="21"/>
    </location>
</feature>
<feature type="chain" id="PRO_0000008349" description="Ependymin-2">
    <location>
        <begin position="22"/>
        <end position="221"/>
    </location>
</feature>
<feature type="glycosylation site" description="N-linked (GlcNAc...) asparagine" evidence="1">
    <location>
        <position position="33"/>
    </location>
</feature>
<feature type="glycosylation site" description="N-linked (GlcNAc...) asparagine" evidence="1">
    <location>
        <position position="73"/>
    </location>
</feature>
<feature type="glycosylation site" description="N-linked (GlcNAc...) asparagine" evidence="1">
    <location>
        <position position="97"/>
    </location>
</feature>
<proteinExistence type="evidence at transcript level"/>
<accession>P28771</accession>
<name>EPD2_ONCMY</name>
<protein>
    <recommendedName>
        <fullName>Ependymin-2</fullName>
    </recommendedName>
    <alternativeName>
        <fullName>Ependymin II</fullName>
        <shortName>EPD-II</shortName>
    </alternativeName>
</protein>